<keyword id="KW-0085">Behavior</keyword>
<keyword id="KW-0256">Endoplasmic reticulum</keyword>
<keyword id="KW-0275">Fatty acid biosynthesis</keyword>
<keyword id="KW-0276">Fatty acid metabolism</keyword>
<keyword id="KW-0444">Lipid biosynthesis</keyword>
<keyword id="KW-0443">Lipid metabolism</keyword>
<keyword id="KW-0472">Membrane</keyword>
<keyword id="KW-1185">Reference proteome</keyword>
<keyword id="KW-0808">Transferase</keyword>
<keyword id="KW-0812">Transmembrane</keyword>
<keyword id="KW-1133">Transmembrane helix</keyword>
<name>ELOF_DROME</name>
<sequence>MFAPIDPVKIPVVSNPWITMGTLIGYLLFVLKLGPKIMEHRKPFHLNGVIRIYNIFQILYNGLILVLGVHFLFVLKAYQISCIVSLPMDHKYKDRERLICTLYLVNKFVDLVETIFFVLRKKDRQISFLHVFHHFAMAFFGYLYYCFHGYGGVAFPQCLLNTAVHVIMYAYYYLSSISKEVQRSLWWKKYITIAQLVQFAIILLHCTITLAQPNCAVNRPLTYGCGSLSAFFAVIFSQFYYHNYIKPGKKSAKQNKN</sequence>
<organism evidence="10">
    <name type="scientific">Drosophila melanogaster</name>
    <name type="common">Fruit fly</name>
    <dbReference type="NCBI Taxonomy" id="7227"/>
    <lineage>
        <taxon>Eukaryota</taxon>
        <taxon>Metazoa</taxon>
        <taxon>Ecdysozoa</taxon>
        <taxon>Arthropoda</taxon>
        <taxon>Hexapoda</taxon>
        <taxon>Insecta</taxon>
        <taxon>Pterygota</taxon>
        <taxon>Neoptera</taxon>
        <taxon>Endopterygota</taxon>
        <taxon>Diptera</taxon>
        <taxon>Brachycera</taxon>
        <taxon>Muscomorpha</taxon>
        <taxon>Ephydroidea</taxon>
        <taxon>Drosophilidae</taxon>
        <taxon>Drosophila</taxon>
        <taxon>Sophophora</taxon>
    </lineage>
</organism>
<gene>
    <name evidence="4" type="primary">eloF</name>
    <name evidence="9" type="ORF">CG16905</name>
</gene>
<proteinExistence type="evidence at protein level"/>
<reference evidence="8" key="1">
    <citation type="journal article" date="2007" name="Proc. Natl. Acad. Sci. U.S.A.">
        <title>A female-biased expressed elongase involved in long-chain hydrocarbon biosynthesis and courtship behavior in Drosophila melanogaster.</title>
        <authorList>
            <person name="Chertemps T."/>
            <person name="Duportets L."/>
            <person name="Labeur C."/>
            <person name="Ueda R."/>
            <person name="Takahashi K."/>
            <person name="Saigo K."/>
            <person name="Wicker-Thomas C."/>
        </authorList>
    </citation>
    <scope>NUCLEOTIDE SEQUENCE [MRNA]</scope>
    <scope>FUNCTION</scope>
    <scope>CATALYTIC ACTIVITY</scope>
    <scope>SUBCELLULAR LOCATION</scope>
    <scope>TISSUE SPECIFICITY</scope>
    <scope>PATHWAY</scope>
    <scope>DISRUPTION PHENOTYPE</scope>
    <source>
        <strain evidence="8">Canton-S</strain>
    </source>
</reference>
<reference evidence="10" key="2">
    <citation type="journal article" date="2000" name="Science">
        <title>The genome sequence of Drosophila melanogaster.</title>
        <authorList>
            <person name="Adams M.D."/>
            <person name="Celniker S.E."/>
            <person name="Holt R.A."/>
            <person name="Evans C.A."/>
            <person name="Gocayne J.D."/>
            <person name="Amanatides P.G."/>
            <person name="Scherer S.E."/>
            <person name="Li P.W."/>
            <person name="Hoskins R.A."/>
            <person name="Galle R.F."/>
            <person name="George R.A."/>
            <person name="Lewis S.E."/>
            <person name="Richards S."/>
            <person name="Ashburner M."/>
            <person name="Henderson S.N."/>
            <person name="Sutton G.G."/>
            <person name="Wortman J.R."/>
            <person name="Yandell M.D."/>
            <person name="Zhang Q."/>
            <person name="Chen L.X."/>
            <person name="Brandon R.C."/>
            <person name="Rogers Y.-H.C."/>
            <person name="Blazej R.G."/>
            <person name="Champe M."/>
            <person name="Pfeiffer B.D."/>
            <person name="Wan K.H."/>
            <person name="Doyle C."/>
            <person name="Baxter E.G."/>
            <person name="Helt G."/>
            <person name="Nelson C.R."/>
            <person name="Miklos G.L.G."/>
            <person name="Abril J.F."/>
            <person name="Agbayani A."/>
            <person name="An H.-J."/>
            <person name="Andrews-Pfannkoch C."/>
            <person name="Baldwin D."/>
            <person name="Ballew R.M."/>
            <person name="Basu A."/>
            <person name="Baxendale J."/>
            <person name="Bayraktaroglu L."/>
            <person name="Beasley E.M."/>
            <person name="Beeson K.Y."/>
            <person name="Benos P.V."/>
            <person name="Berman B.P."/>
            <person name="Bhandari D."/>
            <person name="Bolshakov S."/>
            <person name="Borkova D."/>
            <person name="Botchan M.R."/>
            <person name="Bouck J."/>
            <person name="Brokstein P."/>
            <person name="Brottier P."/>
            <person name="Burtis K.C."/>
            <person name="Busam D.A."/>
            <person name="Butler H."/>
            <person name="Cadieu E."/>
            <person name="Center A."/>
            <person name="Chandra I."/>
            <person name="Cherry J.M."/>
            <person name="Cawley S."/>
            <person name="Dahlke C."/>
            <person name="Davenport L.B."/>
            <person name="Davies P."/>
            <person name="de Pablos B."/>
            <person name="Delcher A."/>
            <person name="Deng Z."/>
            <person name="Mays A.D."/>
            <person name="Dew I."/>
            <person name="Dietz S.M."/>
            <person name="Dodson K."/>
            <person name="Doup L.E."/>
            <person name="Downes M."/>
            <person name="Dugan-Rocha S."/>
            <person name="Dunkov B.C."/>
            <person name="Dunn P."/>
            <person name="Durbin K.J."/>
            <person name="Evangelista C.C."/>
            <person name="Ferraz C."/>
            <person name="Ferriera S."/>
            <person name="Fleischmann W."/>
            <person name="Fosler C."/>
            <person name="Gabrielian A.E."/>
            <person name="Garg N.S."/>
            <person name="Gelbart W.M."/>
            <person name="Glasser K."/>
            <person name="Glodek A."/>
            <person name="Gong F."/>
            <person name="Gorrell J.H."/>
            <person name="Gu Z."/>
            <person name="Guan P."/>
            <person name="Harris M."/>
            <person name="Harris N.L."/>
            <person name="Harvey D.A."/>
            <person name="Heiman T.J."/>
            <person name="Hernandez J.R."/>
            <person name="Houck J."/>
            <person name="Hostin D."/>
            <person name="Houston K.A."/>
            <person name="Howland T.J."/>
            <person name="Wei M.-H."/>
            <person name="Ibegwam C."/>
            <person name="Jalali M."/>
            <person name="Kalush F."/>
            <person name="Karpen G.H."/>
            <person name="Ke Z."/>
            <person name="Kennison J.A."/>
            <person name="Ketchum K.A."/>
            <person name="Kimmel B.E."/>
            <person name="Kodira C.D."/>
            <person name="Kraft C.L."/>
            <person name="Kravitz S."/>
            <person name="Kulp D."/>
            <person name="Lai Z."/>
            <person name="Lasko P."/>
            <person name="Lei Y."/>
            <person name="Levitsky A.A."/>
            <person name="Li J.H."/>
            <person name="Li Z."/>
            <person name="Liang Y."/>
            <person name="Lin X."/>
            <person name="Liu X."/>
            <person name="Mattei B."/>
            <person name="McIntosh T.C."/>
            <person name="McLeod M.P."/>
            <person name="McPherson D."/>
            <person name="Merkulov G."/>
            <person name="Milshina N.V."/>
            <person name="Mobarry C."/>
            <person name="Morris J."/>
            <person name="Moshrefi A."/>
            <person name="Mount S.M."/>
            <person name="Moy M."/>
            <person name="Murphy B."/>
            <person name="Murphy L."/>
            <person name="Muzny D.M."/>
            <person name="Nelson D.L."/>
            <person name="Nelson D.R."/>
            <person name="Nelson K.A."/>
            <person name="Nixon K."/>
            <person name="Nusskern D.R."/>
            <person name="Pacleb J.M."/>
            <person name="Palazzolo M."/>
            <person name="Pittman G.S."/>
            <person name="Pan S."/>
            <person name="Pollard J."/>
            <person name="Puri V."/>
            <person name="Reese M.G."/>
            <person name="Reinert K."/>
            <person name="Remington K."/>
            <person name="Saunders R.D.C."/>
            <person name="Scheeler F."/>
            <person name="Shen H."/>
            <person name="Shue B.C."/>
            <person name="Siden-Kiamos I."/>
            <person name="Simpson M."/>
            <person name="Skupski M.P."/>
            <person name="Smith T.J."/>
            <person name="Spier E."/>
            <person name="Spradling A.C."/>
            <person name="Stapleton M."/>
            <person name="Strong R."/>
            <person name="Sun E."/>
            <person name="Svirskas R."/>
            <person name="Tector C."/>
            <person name="Turner R."/>
            <person name="Venter E."/>
            <person name="Wang A.H."/>
            <person name="Wang X."/>
            <person name="Wang Z.-Y."/>
            <person name="Wassarman D.A."/>
            <person name="Weinstock G.M."/>
            <person name="Weissenbach J."/>
            <person name="Williams S.M."/>
            <person name="Woodage T."/>
            <person name="Worley K.C."/>
            <person name="Wu D."/>
            <person name="Yang S."/>
            <person name="Yao Q.A."/>
            <person name="Ye J."/>
            <person name="Yeh R.-F."/>
            <person name="Zaveri J.S."/>
            <person name="Zhan M."/>
            <person name="Zhang G."/>
            <person name="Zhao Q."/>
            <person name="Zheng L."/>
            <person name="Zheng X.H."/>
            <person name="Zhong F.N."/>
            <person name="Zhong W."/>
            <person name="Zhou X."/>
            <person name="Zhu S.C."/>
            <person name="Zhu X."/>
            <person name="Smith H.O."/>
            <person name="Gibbs R.A."/>
            <person name="Myers E.W."/>
            <person name="Rubin G.M."/>
            <person name="Venter J.C."/>
        </authorList>
    </citation>
    <scope>NUCLEOTIDE SEQUENCE [LARGE SCALE GENOMIC DNA]</scope>
    <source>
        <strain evidence="10">Berkeley</strain>
    </source>
</reference>
<reference evidence="10" key="3">
    <citation type="journal article" date="2002" name="Genome Biol.">
        <title>Annotation of the Drosophila melanogaster euchromatic genome: a systematic review.</title>
        <authorList>
            <person name="Misra S."/>
            <person name="Crosby M.A."/>
            <person name="Mungall C.J."/>
            <person name="Matthews B.B."/>
            <person name="Campbell K.S."/>
            <person name="Hradecky P."/>
            <person name="Huang Y."/>
            <person name="Kaminker J.S."/>
            <person name="Millburn G.H."/>
            <person name="Prochnik S.E."/>
            <person name="Smith C.D."/>
            <person name="Tupy J.L."/>
            <person name="Whitfield E.J."/>
            <person name="Bayraktaroglu L."/>
            <person name="Berman B.P."/>
            <person name="Bettencourt B.R."/>
            <person name="Celniker S.E."/>
            <person name="de Grey A.D.N.J."/>
            <person name="Drysdale R.A."/>
            <person name="Harris N.L."/>
            <person name="Richter J."/>
            <person name="Russo S."/>
            <person name="Schroeder A.J."/>
            <person name="Shu S.Q."/>
            <person name="Stapleton M."/>
            <person name="Yamada C."/>
            <person name="Ashburner M."/>
            <person name="Gelbart W.M."/>
            <person name="Rubin G.M."/>
            <person name="Lewis S.E."/>
        </authorList>
    </citation>
    <scope>GENOME REANNOTATION</scope>
    <source>
        <strain evidence="10">Berkeley</strain>
    </source>
</reference>
<reference evidence="7" key="4">
    <citation type="submission" date="2006-03" db="EMBL/GenBank/DDBJ databases">
        <authorList>
            <person name="Stapleton M."/>
            <person name="Carlson J."/>
            <person name="Chavez C."/>
            <person name="Frise E."/>
            <person name="George R."/>
            <person name="Pacleb J."/>
            <person name="Park S."/>
            <person name="Wan K."/>
            <person name="Yu C."/>
            <person name="Celniker S."/>
        </authorList>
    </citation>
    <scope>NUCLEOTIDE SEQUENCE [LARGE SCALE MRNA]</scope>
</reference>
<evidence type="ECO:0000255" key="1"/>
<evidence type="ECO:0000255" key="2">
    <source>
        <dbReference type="RuleBase" id="RU361115"/>
    </source>
</evidence>
<evidence type="ECO:0000269" key="3">
    <source>
    </source>
</evidence>
<evidence type="ECO:0000303" key="4">
    <source>
    </source>
</evidence>
<evidence type="ECO:0000305" key="5"/>
<evidence type="ECO:0000305" key="6">
    <source>
    </source>
</evidence>
<evidence type="ECO:0000312" key="7">
    <source>
        <dbReference type="EMBL" id="ABE01223.1"/>
    </source>
</evidence>
<evidence type="ECO:0000312" key="8">
    <source>
        <dbReference type="EMBL" id="CAL23476.1"/>
    </source>
</evidence>
<evidence type="ECO:0000312" key="9">
    <source>
        <dbReference type="FlyBase" id="FBgn0037762"/>
    </source>
</evidence>
<evidence type="ECO:0000312" key="10">
    <source>
        <dbReference type="Proteomes" id="UP000000803"/>
    </source>
</evidence>
<feature type="chain" id="PRO_0000438397" description="Very long chain fatty acid elongase F">
    <location>
        <begin position="1"/>
        <end position="257"/>
    </location>
</feature>
<feature type="transmembrane region" description="Helical" evidence="1">
    <location>
        <begin position="10"/>
        <end position="30"/>
    </location>
</feature>
<feature type="transmembrane region" description="Helical" evidence="1">
    <location>
        <begin position="55"/>
        <end position="75"/>
    </location>
</feature>
<feature type="transmembrane region" description="Helical" evidence="1">
    <location>
        <begin position="98"/>
        <end position="118"/>
    </location>
</feature>
<feature type="transmembrane region" description="Helical" evidence="1">
    <location>
        <begin position="135"/>
        <end position="155"/>
    </location>
</feature>
<feature type="transmembrane region" description="Helical" evidence="1">
    <location>
        <begin position="158"/>
        <end position="178"/>
    </location>
</feature>
<feature type="transmembrane region" description="Helical" evidence="1">
    <location>
        <begin position="191"/>
        <end position="211"/>
    </location>
</feature>
<feature type="transmembrane region" description="Helical" evidence="1">
    <location>
        <begin position="221"/>
        <end position="241"/>
    </location>
</feature>
<feature type="sequence conflict" description="In Ref. 1; CAL23476." evidence="5" ref="1">
    <original>I</original>
    <variation>T</variation>
    <location>
        <position position="193"/>
    </location>
</feature>
<dbReference type="EC" id="2.3.1.199" evidence="2 3"/>
<dbReference type="EMBL" id="AM292552">
    <property type="protein sequence ID" value="CAL23476.1"/>
    <property type="molecule type" value="mRNA"/>
</dbReference>
<dbReference type="EMBL" id="AE014297">
    <property type="protein sequence ID" value="AAF54461.1"/>
    <property type="molecule type" value="Genomic_DNA"/>
</dbReference>
<dbReference type="EMBL" id="BT024993">
    <property type="protein sequence ID" value="ABE01223.1"/>
    <property type="molecule type" value="mRNA"/>
</dbReference>
<dbReference type="RefSeq" id="NP_649956.1">
    <property type="nucleotide sequence ID" value="NM_141699.3"/>
</dbReference>
<dbReference type="SMR" id="Q9VH58"/>
<dbReference type="FunCoup" id="Q9VH58">
    <property type="interactions" value="28"/>
</dbReference>
<dbReference type="STRING" id="7227.FBpp0081622"/>
<dbReference type="PaxDb" id="7227-FBpp0081622"/>
<dbReference type="DNASU" id="41211"/>
<dbReference type="EnsemblMetazoa" id="FBtr0082144">
    <property type="protein sequence ID" value="FBpp0081622"/>
    <property type="gene ID" value="FBgn0037762"/>
</dbReference>
<dbReference type="GeneID" id="41211"/>
<dbReference type="KEGG" id="dme:Dmel_CG16905"/>
<dbReference type="UCSC" id="CG16905-RA">
    <property type="organism name" value="d. melanogaster"/>
</dbReference>
<dbReference type="AGR" id="FB:FBgn0037762"/>
<dbReference type="CTD" id="41211"/>
<dbReference type="FlyBase" id="FBgn0037762">
    <property type="gene designation" value="eloF"/>
</dbReference>
<dbReference type="VEuPathDB" id="VectorBase:FBgn0037762"/>
<dbReference type="eggNOG" id="KOG3071">
    <property type="taxonomic scope" value="Eukaryota"/>
</dbReference>
<dbReference type="GeneTree" id="ENSGT01050000244838"/>
<dbReference type="HOGENOM" id="CLU_048483_0_2_1"/>
<dbReference type="InParanoid" id="Q9VH58"/>
<dbReference type="OMA" id="VAFPQCL"/>
<dbReference type="OrthoDB" id="434092at2759"/>
<dbReference type="PhylomeDB" id="Q9VH58"/>
<dbReference type="Reactome" id="R-DME-75876">
    <property type="pathway name" value="Synthesis of very long-chain fatty acyl-CoAs"/>
</dbReference>
<dbReference type="UniPathway" id="UPA00094"/>
<dbReference type="BioGRID-ORCS" id="41211">
    <property type="hits" value="0 hits in 1 CRISPR screen"/>
</dbReference>
<dbReference type="GenomeRNAi" id="41211"/>
<dbReference type="PRO" id="PR:Q9VH58"/>
<dbReference type="Proteomes" id="UP000000803">
    <property type="component" value="Chromosome 3R"/>
</dbReference>
<dbReference type="Bgee" id="FBgn0037762">
    <property type="expression patterns" value="Expressed in adult oenocyte (Drosophila) in dorsal vessel heart and 37 other cell types or tissues"/>
</dbReference>
<dbReference type="GO" id="GO:0005789">
    <property type="term" value="C:endoplasmic reticulum membrane"/>
    <property type="evidence" value="ECO:0000318"/>
    <property type="project" value="GO_Central"/>
</dbReference>
<dbReference type="GO" id="GO:0009922">
    <property type="term" value="F:fatty acid elongase activity"/>
    <property type="evidence" value="ECO:0000314"/>
    <property type="project" value="FlyBase"/>
</dbReference>
<dbReference type="GO" id="GO:0007619">
    <property type="term" value="P:courtship behavior"/>
    <property type="evidence" value="ECO:0000315"/>
    <property type="project" value="FlyBase"/>
</dbReference>
<dbReference type="GO" id="GO:0030497">
    <property type="term" value="P:fatty acid elongation"/>
    <property type="evidence" value="ECO:0000250"/>
    <property type="project" value="FlyBase"/>
</dbReference>
<dbReference type="GO" id="GO:0034625">
    <property type="term" value="P:fatty acid elongation, monounsaturated fatty acid"/>
    <property type="evidence" value="ECO:0000318"/>
    <property type="project" value="GO_Central"/>
</dbReference>
<dbReference type="GO" id="GO:0034626">
    <property type="term" value="P:fatty acid elongation, polyunsaturated fatty acid"/>
    <property type="evidence" value="ECO:0000318"/>
    <property type="project" value="GO_Central"/>
</dbReference>
<dbReference type="GO" id="GO:0019367">
    <property type="term" value="P:fatty acid elongation, saturated fatty acid"/>
    <property type="evidence" value="ECO:0000318"/>
    <property type="project" value="GO_Central"/>
</dbReference>
<dbReference type="GO" id="GO:0042810">
    <property type="term" value="P:pheromone metabolic process"/>
    <property type="evidence" value="ECO:0000315"/>
    <property type="project" value="FlyBase"/>
</dbReference>
<dbReference type="GO" id="GO:0030148">
    <property type="term" value="P:sphingolipid biosynthetic process"/>
    <property type="evidence" value="ECO:0000318"/>
    <property type="project" value="GO_Central"/>
</dbReference>
<dbReference type="GO" id="GO:0042761">
    <property type="term" value="P:very long-chain fatty acid biosynthetic process"/>
    <property type="evidence" value="ECO:0000314"/>
    <property type="project" value="FlyBase"/>
</dbReference>
<dbReference type="InterPro" id="IPR030457">
    <property type="entry name" value="ELO_CS"/>
</dbReference>
<dbReference type="InterPro" id="IPR002076">
    <property type="entry name" value="ELO_fam"/>
</dbReference>
<dbReference type="PANTHER" id="PTHR11157:SF116">
    <property type="entry name" value="ELONGATION OF VERY LONG CHAIN FATTY ACIDS PROTEIN-RELATED"/>
    <property type="match status" value="1"/>
</dbReference>
<dbReference type="PANTHER" id="PTHR11157">
    <property type="entry name" value="FATTY ACID ACYL TRANSFERASE-RELATED"/>
    <property type="match status" value="1"/>
</dbReference>
<dbReference type="Pfam" id="PF01151">
    <property type="entry name" value="ELO"/>
    <property type="match status" value="1"/>
</dbReference>
<dbReference type="PROSITE" id="PS01188">
    <property type="entry name" value="ELO"/>
    <property type="match status" value="1"/>
</dbReference>
<protein>
    <recommendedName>
        <fullName evidence="5">Very long chain fatty acid elongase F</fullName>
        <ecNumber evidence="2 3">2.3.1.199</ecNumber>
    </recommendedName>
    <alternativeName>
        <fullName evidence="6">Elongation of very long chain fatty acids protein F</fullName>
    </alternativeName>
</protein>
<accession>Q9VH58</accession>
<accession>Q0E5H2</accession>
<comment type="function">
    <text evidence="3">Condensing enzyme that elongates saturated and monounsaturated very long chain fatty acids, to yield products up to 30 carbons in length. May also elongate diunsaturated fatty acids. Important for courtship behavior where it probably has a role in female pheromone biosynthesis.</text>
</comment>
<comment type="catalytic activity">
    <reaction evidence="2 3">
        <text>a very-long-chain acyl-CoA + malonyl-CoA + H(+) = a very-long-chain 3-oxoacyl-CoA + CO2 + CoA</text>
        <dbReference type="Rhea" id="RHEA:32727"/>
        <dbReference type="ChEBI" id="CHEBI:15378"/>
        <dbReference type="ChEBI" id="CHEBI:16526"/>
        <dbReference type="ChEBI" id="CHEBI:57287"/>
        <dbReference type="ChEBI" id="CHEBI:57384"/>
        <dbReference type="ChEBI" id="CHEBI:90725"/>
        <dbReference type="ChEBI" id="CHEBI:90736"/>
        <dbReference type="EC" id="2.3.1.199"/>
    </reaction>
</comment>
<comment type="pathway">
    <text evidence="3">Lipid metabolism; fatty acid biosynthesis.</text>
</comment>
<comment type="subcellular location">
    <subcellularLocation>
        <location evidence="6">Endoplasmic reticulum membrane</location>
        <topology evidence="1">Multi-pass membrane protein</topology>
    </subcellularLocation>
</comment>
<comment type="tissue specificity">
    <text evidence="3">Highly expressed in females. Little or no expression detected in males.</text>
</comment>
<comment type="disruption phenotype">
    <text evidence="3">RNAi-mediated knockdown results in an altered hydrocarbon profile in females, with significantly increased levels of C25 7,11-dienes and reduced levels of C27 7,11-dienes. Monounsaturated and saturated hydrocarbon levels are also affected with increased levels of C23 fatty acids and reduced levels of C27 fatty acids. Males have a normal hydrocarbon profile. RNAi-mediated knockdown in females (mated to wild-type males) results in impaired courtship behavior with reduced numbers of copulation attempts and increased copulation latency.</text>
</comment>
<comment type="similarity">
    <text evidence="5">Belongs to the ELO family.</text>
</comment>